<gene>
    <name evidence="1" type="primary">rplL</name>
    <name type="ordered locus">Ajs_3898</name>
</gene>
<name>RL7_ACISJ</name>
<evidence type="ECO:0000255" key="1">
    <source>
        <dbReference type="HAMAP-Rule" id="MF_00368"/>
    </source>
</evidence>
<evidence type="ECO:0000305" key="2"/>
<organism>
    <name type="scientific">Acidovorax sp. (strain JS42)</name>
    <dbReference type="NCBI Taxonomy" id="232721"/>
    <lineage>
        <taxon>Bacteria</taxon>
        <taxon>Pseudomonadati</taxon>
        <taxon>Pseudomonadota</taxon>
        <taxon>Betaproteobacteria</taxon>
        <taxon>Burkholderiales</taxon>
        <taxon>Comamonadaceae</taxon>
        <taxon>Acidovorax</taxon>
    </lineage>
</organism>
<reference key="1">
    <citation type="submission" date="2006-12" db="EMBL/GenBank/DDBJ databases">
        <title>Complete sequence of chromosome 1 of Acidovorax sp. JS42.</title>
        <authorList>
            <person name="Copeland A."/>
            <person name="Lucas S."/>
            <person name="Lapidus A."/>
            <person name="Barry K."/>
            <person name="Detter J.C."/>
            <person name="Glavina del Rio T."/>
            <person name="Dalin E."/>
            <person name="Tice H."/>
            <person name="Pitluck S."/>
            <person name="Chertkov O."/>
            <person name="Brettin T."/>
            <person name="Bruce D."/>
            <person name="Han C."/>
            <person name="Tapia R."/>
            <person name="Gilna P."/>
            <person name="Schmutz J."/>
            <person name="Larimer F."/>
            <person name="Land M."/>
            <person name="Hauser L."/>
            <person name="Kyrpides N."/>
            <person name="Kim E."/>
            <person name="Stahl D."/>
            <person name="Richardson P."/>
        </authorList>
    </citation>
    <scope>NUCLEOTIDE SEQUENCE [LARGE SCALE GENOMIC DNA]</scope>
    <source>
        <strain>JS42</strain>
    </source>
</reference>
<proteinExistence type="inferred from homology"/>
<protein>
    <recommendedName>
        <fullName evidence="1">Large ribosomal subunit protein bL12</fullName>
    </recommendedName>
    <alternativeName>
        <fullName evidence="2">50S ribosomal protein L7/L12</fullName>
    </alternativeName>
</protein>
<dbReference type="EMBL" id="CP000539">
    <property type="protein sequence ID" value="ABM44005.1"/>
    <property type="molecule type" value="Genomic_DNA"/>
</dbReference>
<dbReference type="SMR" id="A1WCN0"/>
<dbReference type="STRING" id="232721.Ajs_3898"/>
<dbReference type="KEGG" id="ajs:Ajs_3898"/>
<dbReference type="eggNOG" id="COG0222">
    <property type="taxonomic scope" value="Bacteria"/>
</dbReference>
<dbReference type="HOGENOM" id="CLU_086499_3_2_4"/>
<dbReference type="Proteomes" id="UP000000645">
    <property type="component" value="Chromosome"/>
</dbReference>
<dbReference type="GO" id="GO:0022625">
    <property type="term" value="C:cytosolic large ribosomal subunit"/>
    <property type="evidence" value="ECO:0007669"/>
    <property type="project" value="TreeGrafter"/>
</dbReference>
<dbReference type="GO" id="GO:0003729">
    <property type="term" value="F:mRNA binding"/>
    <property type="evidence" value="ECO:0007669"/>
    <property type="project" value="TreeGrafter"/>
</dbReference>
<dbReference type="GO" id="GO:0003735">
    <property type="term" value="F:structural constituent of ribosome"/>
    <property type="evidence" value="ECO:0007669"/>
    <property type="project" value="InterPro"/>
</dbReference>
<dbReference type="GO" id="GO:0006412">
    <property type="term" value="P:translation"/>
    <property type="evidence" value="ECO:0007669"/>
    <property type="project" value="UniProtKB-UniRule"/>
</dbReference>
<dbReference type="CDD" id="cd00387">
    <property type="entry name" value="Ribosomal_L7_L12"/>
    <property type="match status" value="1"/>
</dbReference>
<dbReference type="FunFam" id="3.30.1390.10:FF:000001">
    <property type="entry name" value="50S ribosomal protein L7/L12"/>
    <property type="match status" value="1"/>
</dbReference>
<dbReference type="Gene3D" id="3.30.1390.10">
    <property type="match status" value="1"/>
</dbReference>
<dbReference type="Gene3D" id="1.20.5.710">
    <property type="entry name" value="Single helix bin"/>
    <property type="match status" value="1"/>
</dbReference>
<dbReference type="HAMAP" id="MF_00368">
    <property type="entry name" value="Ribosomal_bL12"/>
    <property type="match status" value="1"/>
</dbReference>
<dbReference type="InterPro" id="IPR000206">
    <property type="entry name" value="Ribosomal_bL12"/>
</dbReference>
<dbReference type="InterPro" id="IPR013823">
    <property type="entry name" value="Ribosomal_bL12_C"/>
</dbReference>
<dbReference type="InterPro" id="IPR014719">
    <property type="entry name" value="Ribosomal_bL12_C/ClpS-like"/>
</dbReference>
<dbReference type="InterPro" id="IPR008932">
    <property type="entry name" value="Ribosomal_bL12_oligo"/>
</dbReference>
<dbReference type="InterPro" id="IPR036235">
    <property type="entry name" value="Ribosomal_bL12_oligo_N_sf"/>
</dbReference>
<dbReference type="NCBIfam" id="TIGR00855">
    <property type="entry name" value="L12"/>
    <property type="match status" value="1"/>
</dbReference>
<dbReference type="PANTHER" id="PTHR45987">
    <property type="entry name" value="39S RIBOSOMAL PROTEIN L12"/>
    <property type="match status" value="1"/>
</dbReference>
<dbReference type="PANTHER" id="PTHR45987:SF4">
    <property type="entry name" value="LARGE RIBOSOMAL SUBUNIT PROTEIN BL12M"/>
    <property type="match status" value="1"/>
</dbReference>
<dbReference type="Pfam" id="PF00542">
    <property type="entry name" value="Ribosomal_L12"/>
    <property type="match status" value="1"/>
</dbReference>
<dbReference type="Pfam" id="PF16320">
    <property type="entry name" value="Ribosomal_L12_N"/>
    <property type="match status" value="1"/>
</dbReference>
<dbReference type="SUPFAM" id="SSF54736">
    <property type="entry name" value="ClpS-like"/>
    <property type="match status" value="1"/>
</dbReference>
<dbReference type="SUPFAM" id="SSF48300">
    <property type="entry name" value="Ribosomal protein L7/12, oligomerisation (N-terminal) domain"/>
    <property type="match status" value="1"/>
</dbReference>
<accession>A1WCN0</accession>
<sequence length="126" mass="12625">MAFDKDAFLTALDSMTVLELNDLVEAIEEKFGVSAAAMAAPAAGGAAGGGAAAAEEKTEFNVVLADAGANKVAVIKAVREITGLGLKEAKDLVDGAPKNVKEGIAKADAEAAVKKLVEAGAKAELK</sequence>
<keyword id="KW-0687">Ribonucleoprotein</keyword>
<keyword id="KW-0689">Ribosomal protein</keyword>
<feature type="chain" id="PRO_1000006950" description="Large ribosomal subunit protein bL12">
    <location>
        <begin position="1"/>
        <end position="126"/>
    </location>
</feature>
<comment type="function">
    <text evidence="1">Forms part of the ribosomal stalk which helps the ribosome interact with GTP-bound translation factors. Is thus essential for accurate translation.</text>
</comment>
<comment type="subunit">
    <text evidence="1">Homodimer. Part of the ribosomal stalk of the 50S ribosomal subunit. Forms a multimeric L10(L12)X complex, where L10 forms an elongated spine to which 2 to 4 L12 dimers bind in a sequential fashion. Binds GTP-bound translation factors.</text>
</comment>
<comment type="similarity">
    <text evidence="1">Belongs to the bacterial ribosomal protein bL12 family.</text>
</comment>